<protein>
    <recommendedName>
        <fullName evidence="1">UPF0201 protein PAE1632</fullName>
    </recommendedName>
</protein>
<feature type="chain" id="PRO_0000094514" description="UPF0201 protein PAE1632">
    <location>
        <begin position="1"/>
        <end position="143"/>
    </location>
</feature>
<keyword id="KW-1185">Reference proteome</keyword>
<dbReference type="EMBL" id="AE009441">
    <property type="protein sequence ID" value="AAL63617.1"/>
    <property type="molecule type" value="Genomic_DNA"/>
</dbReference>
<dbReference type="RefSeq" id="WP_011008090.1">
    <property type="nucleotide sequence ID" value="NC_003364.1"/>
</dbReference>
<dbReference type="SMR" id="Q8ZWT2"/>
<dbReference type="STRING" id="178306.PAE1632"/>
<dbReference type="EnsemblBacteria" id="AAL63617">
    <property type="protein sequence ID" value="AAL63617"/>
    <property type="gene ID" value="PAE1632"/>
</dbReference>
<dbReference type="GeneID" id="1465866"/>
<dbReference type="KEGG" id="pai:PAE1632"/>
<dbReference type="PATRIC" id="fig|178306.9.peg.1206"/>
<dbReference type="eggNOG" id="arCOG01043">
    <property type="taxonomic scope" value="Archaea"/>
</dbReference>
<dbReference type="HOGENOM" id="CLU_134829_1_0_2"/>
<dbReference type="InParanoid" id="Q8ZWT2"/>
<dbReference type="Proteomes" id="UP000002439">
    <property type="component" value="Chromosome"/>
</dbReference>
<dbReference type="Gene3D" id="3.30.1440.10">
    <property type="match status" value="1"/>
</dbReference>
<dbReference type="HAMAP" id="MF_01112">
    <property type="entry name" value="UPF0201"/>
    <property type="match status" value="1"/>
</dbReference>
<dbReference type="InterPro" id="IPR002739">
    <property type="entry name" value="PAB1135-like"/>
</dbReference>
<dbReference type="InterPro" id="IPR022803">
    <property type="entry name" value="Ribosomal_uL5_dom_sf"/>
</dbReference>
<dbReference type="PANTHER" id="PTHR39652">
    <property type="entry name" value="UPF0201 PROTEIN TK1335"/>
    <property type="match status" value="1"/>
</dbReference>
<dbReference type="PANTHER" id="PTHR39652:SF1">
    <property type="entry name" value="UPF0201 PROTEIN TK1335"/>
    <property type="match status" value="1"/>
</dbReference>
<dbReference type="Pfam" id="PF01877">
    <property type="entry name" value="RNA_binding"/>
    <property type="match status" value="1"/>
</dbReference>
<dbReference type="SUPFAM" id="SSF55282">
    <property type="entry name" value="RL5-like"/>
    <property type="match status" value="1"/>
</dbReference>
<gene>
    <name type="ordered locus">PAE1632</name>
</gene>
<accession>Q8ZWT2</accession>
<comment type="similarity">
    <text evidence="1">Belongs to the UPF0201 family.</text>
</comment>
<reference key="1">
    <citation type="journal article" date="2002" name="Proc. Natl. Acad. Sci. U.S.A.">
        <title>Genome sequence of the hyperthermophilic crenarchaeon Pyrobaculum aerophilum.</title>
        <authorList>
            <person name="Fitz-Gibbon S.T."/>
            <person name="Ladner H."/>
            <person name="Kim U.-J."/>
            <person name="Stetter K.O."/>
            <person name="Simon M.I."/>
            <person name="Miller J.H."/>
        </authorList>
    </citation>
    <scope>NUCLEOTIDE SEQUENCE [LARGE SCALE GENOMIC DNA]</scope>
    <source>
        <strain>ATCC 51768 / DSM 7523 / JCM 9630 / CIP 104966 / NBRC 100827 / IM2</strain>
    </source>
</reference>
<name>Y1632_PYRAE</name>
<sequence>MRVEAIVEVRMTEDRGKVLKALENVFTPMRIEERQSDMGTILVATCEGHKCLEKLRSAIWRQGIQDAARSVISRGIVGEDTVVFSVNKQAAYVGVVSFVTEAGESPLGPITFTVKTNDVRQFIDWLAPRTYRGRVYYEAPPPD</sequence>
<organism>
    <name type="scientific">Pyrobaculum aerophilum (strain ATCC 51768 / DSM 7523 / JCM 9630 / CIP 104966 / NBRC 100827 / IM2)</name>
    <dbReference type="NCBI Taxonomy" id="178306"/>
    <lineage>
        <taxon>Archaea</taxon>
        <taxon>Thermoproteota</taxon>
        <taxon>Thermoprotei</taxon>
        <taxon>Thermoproteales</taxon>
        <taxon>Thermoproteaceae</taxon>
        <taxon>Pyrobaculum</taxon>
    </lineage>
</organism>
<evidence type="ECO:0000255" key="1">
    <source>
        <dbReference type="HAMAP-Rule" id="MF_01112"/>
    </source>
</evidence>
<proteinExistence type="inferred from homology"/>